<name>NU5C_SYNY3</name>
<sequence>MELLYQLAWLIPVLPLFGATVVGIGLISFNQATNKLRQINAVFIISCLGAALVMSGALLWDQIQGHASYAQMIEWASAGSFHLEMGYVIDHLSALMLVIVTSVALLVMIYTDGYMAHDPGYVRFYAYLSLFASSMLGLVISPNLVQVYIFWELVGMCSYLLIGFWYDRKAAADACQKAFVTNRVGDFGLLLGILGLYWATGSFDFGTIGERLEGLVSSGVLSGAIAAILAILVFLGPVAKSAQFPLHVWLPDAMEGPTPISALIHAATMVAAGVFLVARMYPVFEPIPVVMNTIAFTGCFTAFLGATIALTQNDIKKGLAYSTISQLGYMVMAMGIGAYSAGLFHLMTHAYFKAMLFLCSGSVIHGMEGVVGHDPILAQDMRIMGGLRKYMPITATCFLIGTLAICGIPPFAGFWSKDEILGLAFQANPLLWFVGWATAGMTAFYMFRMYFMTFEGGFRGNDQEAKDGVLQFYGLLPNFGPGAMNVKELDHEAGHDDHGHSSEPHESPLTMTFPLMALAVPSVLIGLLGRPWANQFEAFIHAPGEVVEHAAEFEWGEFYVMAGNSIGIALIGITVASLMYWQHKFDPKVLAEKFPSLYQLSLNKWYFDDLYDKLFVQGSRRVARQIMEVDYKVIDGAVNLTGLVTLVSGEGLKYLENGRAQFYALIVFGAVLGFVIVFSLT</sequence>
<evidence type="ECO:0000255" key="1"/>
<evidence type="ECO:0000305" key="2"/>
<feature type="chain" id="PRO_0000118210" description="NAD(P)H-quinone oxidoreductase chain 5">
    <location>
        <begin position="1"/>
        <end position="681"/>
    </location>
</feature>
<feature type="transmembrane region" description="Helical" evidence="1">
    <location>
        <begin position="7"/>
        <end position="27"/>
    </location>
</feature>
<feature type="transmembrane region" description="Helical" evidence="1">
    <location>
        <begin position="39"/>
        <end position="59"/>
    </location>
</feature>
<feature type="transmembrane region" description="Helical" evidence="1">
    <location>
        <begin position="89"/>
        <end position="109"/>
    </location>
</feature>
<feature type="transmembrane region" description="Helical" evidence="1">
    <location>
        <begin position="120"/>
        <end position="140"/>
    </location>
</feature>
<feature type="transmembrane region" description="Helical" evidence="1">
    <location>
        <begin position="144"/>
        <end position="164"/>
    </location>
</feature>
<feature type="transmembrane region" description="Helical" evidence="1">
    <location>
        <begin position="188"/>
        <end position="208"/>
    </location>
</feature>
<feature type="transmembrane region" description="Helical" evidence="1">
    <location>
        <begin position="219"/>
        <end position="239"/>
    </location>
</feature>
<feature type="transmembrane region" description="Helical" evidence="1">
    <location>
        <begin position="258"/>
        <end position="278"/>
    </location>
</feature>
<feature type="transmembrane region" description="Helical" evidence="1">
    <location>
        <begin position="289"/>
        <end position="309"/>
    </location>
</feature>
<feature type="transmembrane region" description="Helical" evidence="1">
    <location>
        <begin position="327"/>
        <end position="347"/>
    </location>
</feature>
<feature type="transmembrane region" description="Helical" evidence="1">
    <location>
        <begin position="352"/>
        <end position="372"/>
    </location>
</feature>
<feature type="transmembrane region" description="Helical" evidence="1">
    <location>
        <begin position="395"/>
        <end position="415"/>
    </location>
</feature>
<feature type="transmembrane region" description="Helical" evidence="1">
    <location>
        <begin position="420"/>
        <end position="440"/>
    </location>
</feature>
<feature type="transmembrane region" description="Helical" evidence="1">
    <location>
        <begin position="509"/>
        <end position="529"/>
    </location>
</feature>
<feature type="transmembrane region" description="Helical" evidence="1">
    <location>
        <begin position="558"/>
        <end position="578"/>
    </location>
</feature>
<feature type="transmembrane region" description="Helical" evidence="1">
    <location>
        <begin position="660"/>
        <end position="680"/>
    </location>
</feature>
<accession>Q55429</accession>
<protein>
    <recommendedName>
        <fullName>NAD(P)H-quinone oxidoreductase chain 5</fullName>
        <ecNumber>7.1.1.-</ecNumber>
    </recommendedName>
    <alternativeName>
        <fullName>NAD(P)H dehydrogenase I, chain 5</fullName>
    </alternativeName>
    <alternativeName>
        <fullName>NDH-1, chain 5</fullName>
    </alternativeName>
</protein>
<comment type="function">
    <text>NDH-1 shuttles electrons from NAD(P)H, via FMN and iron-sulfur (Fe-S) centers, to quinones in the respiratory chain. The immediate electron acceptor for the enzyme in this species is believed to be plastoquinone. Couples the redox reaction to proton translocation (for every two electrons transferred, four hydrogen ions are translocated across the cytoplasmic membrane), and thus conserves the redox energy in a proton gradient.</text>
</comment>
<comment type="catalytic activity">
    <reaction>
        <text>a plastoquinone + NADH + (n+1) H(+)(in) = a plastoquinol + NAD(+) + n H(+)(out)</text>
        <dbReference type="Rhea" id="RHEA:42608"/>
        <dbReference type="Rhea" id="RHEA-COMP:9561"/>
        <dbReference type="Rhea" id="RHEA-COMP:9562"/>
        <dbReference type="ChEBI" id="CHEBI:15378"/>
        <dbReference type="ChEBI" id="CHEBI:17757"/>
        <dbReference type="ChEBI" id="CHEBI:57540"/>
        <dbReference type="ChEBI" id="CHEBI:57945"/>
        <dbReference type="ChEBI" id="CHEBI:62192"/>
    </reaction>
</comment>
<comment type="catalytic activity">
    <reaction>
        <text>a plastoquinone + NADPH + (n+1) H(+)(in) = a plastoquinol + NADP(+) + n H(+)(out)</text>
        <dbReference type="Rhea" id="RHEA:42612"/>
        <dbReference type="Rhea" id="RHEA-COMP:9561"/>
        <dbReference type="Rhea" id="RHEA-COMP:9562"/>
        <dbReference type="ChEBI" id="CHEBI:15378"/>
        <dbReference type="ChEBI" id="CHEBI:17757"/>
        <dbReference type="ChEBI" id="CHEBI:57783"/>
        <dbReference type="ChEBI" id="CHEBI:58349"/>
        <dbReference type="ChEBI" id="CHEBI:62192"/>
    </reaction>
</comment>
<comment type="subcellular location">
    <subcellularLocation>
        <location>Cell membrane</location>
        <topology>Multi-pass membrane protein</topology>
    </subcellularLocation>
</comment>
<comment type="similarity">
    <text evidence="2">Belongs to the complex I subunit 5 family.</text>
</comment>
<keyword id="KW-1003">Cell membrane</keyword>
<keyword id="KW-0472">Membrane</keyword>
<keyword id="KW-0520">NAD</keyword>
<keyword id="KW-0521">NADP</keyword>
<keyword id="KW-0618">Plastoquinone</keyword>
<keyword id="KW-0874">Quinone</keyword>
<keyword id="KW-1185">Reference proteome</keyword>
<keyword id="KW-1278">Translocase</keyword>
<keyword id="KW-0812">Transmembrane</keyword>
<keyword id="KW-1133">Transmembrane helix</keyword>
<gene>
    <name type="primary">ndhF</name>
    <name type="ordered locus">slr0844</name>
</gene>
<organism>
    <name type="scientific">Synechocystis sp. (strain ATCC 27184 / PCC 6803 / Kazusa)</name>
    <dbReference type="NCBI Taxonomy" id="1111708"/>
    <lineage>
        <taxon>Bacteria</taxon>
        <taxon>Bacillati</taxon>
        <taxon>Cyanobacteriota</taxon>
        <taxon>Cyanophyceae</taxon>
        <taxon>Synechococcales</taxon>
        <taxon>Merismopediaceae</taxon>
        <taxon>Synechocystis</taxon>
    </lineage>
</organism>
<reference key="1">
    <citation type="journal article" date="1995" name="DNA Res.">
        <title>Sequence analysis of the genome of the unicellular cyanobacterium Synechocystis sp. strain PCC6803. I. Sequence features in the 1 Mb region from map positions 64% to 92% of the genome.</title>
        <authorList>
            <person name="Kaneko T."/>
            <person name="Tanaka A."/>
            <person name="Sato S."/>
            <person name="Kotani H."/>
            <person name="Sazuka T."/>
            <person name="Miyajima N."/>
            <person name="Sugiura M."/>
            <person name="Tabata S."/>
        </authorList>
    </citation>
    <scope>NUCLEOTIDE SEQUENCE [LARGE SCALE GENOMIC DNA]</scope>
    <source>
        <strain>ATCC 27184 / PCC 6803 / N-1</strain>
    </source>
</reference>
<reference key="2">
    <citation type="journal article" date="1996" name="DNA Res.">
        <title>Sequence analysis of the genome of the unicellular cyanobacterium Synechocystis sp. strain PCC6803. II. Sequence determination of the entire genome and assignment of potential protein-coding regions.</title>
        <authorList>
            <person name="Kaneko T."/>
            <person name="Sato S."/>
            <person name="Kotani H."/>
            <person name="Tanaka A."/>
            <person name="Asamizu E."/>
            <person name="Nakamura Y."/>
            <person name="Miyajima N."/>
            <person name="Hirosawa M."/>
            <person name="Sugiura M."/>
            <person name="Sasamoto S."/>
            <person name="Kimura T."/>
            <person name="Hosouchi T."/>
            <person name="Matsuno A."/>
            <person name="Muraki A."/>
            <person name="Nakazaki N."/>
            <person name="Naruo K."/>
            <person name="Okumura S."/>
            <person name="Shimpo S."/>
            <person name="Takeuchi C."/>
            <person name="Wada T."/>
            <person name="Watanabe A."/>
            <person name="Yamada M."/>
            <person name="Yasuda M."/>
            <person name="Tabata S."/>
        </authorList>
    </citation>
    <scope>NUCLEOTIDE SEQUENCE [LARGE SCALE GENOMIC DNA]</scope>
    <source>
        <strain>ATCC 27184 / PCC 6803 / Kazusa</strain>
    </source>
</reference>
<dbReference type="EC" id="7.1.1.-"/>
<dbReference type="EMBL" id="BA000022">
    <property type="protein sequence ID" value="BAA10530.1"/>
    <property type="molecule type" value="Genomic_DNA"/>
</dbReference>
<dbReference type="PIR" id="S75795">
    <property type="entry name" value="S75795"/>
</dbReference>
<dbReference type="SMR" id="Q55429"/>
<dbReference type="FunCoup" id="Q55429">
    <property type="interactions" value="160"/>
</dbReference>
<dbReference type="IntAct" id="Q55429">
    <property type="interactions" value="9"/>
</dbReference>
<dbReference type="STRING" id="1148.gene:10500034"/>
<dbReference type="PaxDb" id="1148-1001283"/>
<dbReference type="EnsemblBacteria" id="BAA10530">
    <property type="protein sequence ID" value="BAA10530"/>
    <property type="gene ID" value="BAA10530"/>
</dbReference>
<dbReference type="KEGG" id="syn:slr0844"/>
<dbReference type="eggNOG" id="COG1009">
    <property type="taxonomic scope" value="Bacteria"/>
</dbReference>
<dbReference type="InParanoid" id="Q55429"/>
<dbReference type="PhylomeDB" id="Q55429"/>
<dbReference type="Proteomes" id="UP000001425">
    <property type="component" value="Chromosome"/>
</dbReference>
<dbReference type="GO" id="GO:0005886">
    <property type="term" value="C:plasma membrane"/>
    <property type="evidence" value="ECO:0007669"/>
    <property type="project" value="UniProtKB-SubCell"/>
</dbReference>
<dbReference type="GO" id="GO:0008137">
    <property type="term" value="F:NADH dehydrogenase (ubiquinone) activity"/>
    <property type="evidence" value="ECO:0007669"/>
    <property type="project" value="InterPro"/>
</dbReference>
<dbReference type="GO" id="GO:0048038">
    <property type="term" value="F:quinone binding"/>
    <property type="evidence" value="ECO:0007669"/>
    <property type="project" value="UniProtKB-KW"/>
</dbReference>
<dbReference type="GO" id="GO:0042773">
    <property type="term" value="P:ATP synthesis coupled electron transport"/>
    <property type="evidence" value="ECO:0007669"/>
    <property type="project" value="InterPro"/>
</dbReference>
<dbReference type="GO" id="GO:0015990">
    <property type="term" value="P:electron transport coupled proton transport"/>
    <property type="evidence" value="ECO:0000318"/>
    <property type="project" value="GO_Central"/>
</dbReference>
<dbReference type="Gene3D" id="1.20.5.2700">
    <property type="match status" value="1"/>
</dbReference>
<dbReference type="InterPro" id="IPR002128">
    <property type="entry name" value="NADH_UbQ_OxRdtase_chlpt_su5_C"/>
</dbReference>
<dbReference type="InterPro" id="IPR018393">
    <property type="entry name" value="NADHpl_OxRdtase_5_subgr"/>
</dbReference>
<dbReference type="InterPro" id="IPR001750">
    <property type="entry name" value="ND/Mrp_TM"/>
</dbReference>
<dbReference type="InterPro" id="IPR003945">
    <property type="entry name" value="NU5C-like"/>
</dbReference>
<dbReference type="InterPro" id="IPR001516">
    <property type="entry name" value="Proton_antipo_N"/>
</dbReference>
<dbReference type="NCBIfam" id="TIGR01974">
    <property type="entry name" value="NDH_I_L"/>
    <property type="match status" value="1"/>
</dbReference>
<dbReference type="NCBIfam" id="NF005141">
    <property type="entry name" value="PRK06590.1"/>
    <property type="match status" value="1"/>
</dbReference>
<dbReference type="NCBIfam" id="NF005626">
    <property type="entry name" value="PRK07376.1"/>
    <property type="match status" value="1"/>
</dbReference>
<dbReference type="PANTHER" id="PTHR42829">
    <property type="entry name" value="NADH-UBIQUINONE OXIDOREDUCTASE CHAIN 5"/>
    <property type="match status" value="1"/>
</dbReference>
<dbReference type="PANTHER" id="PTHR42829:SF2">
    <property type="entry name" value="NADH-UBIQUINONE OXIDOREDUCTASE CHAIN 5"/>
    <property type="match status" value="1"/>
</dbReference>
<dbReference type="Pfam" id="PF01010">
    <property type="entry name" value="Proton_antipo_C"/>
    <property type="match status" value="1"/>
</dbReference>
<dbReference type="Pfam" id="PF00361">
    <property type="entry name" value="Proton_antipo_M"/>
    <property type="match status" value="1"/>
</dbReference>
<dbReference type="Pfam" id="PF00662">
    <property type="entry name" value="Proton_antipo_N"/>
    <property type="match status" value="1"/>
</dbReference>
<dbReference type="PRINTS" id="PR01434">
    <property type="entry name" value="NADHDHGNASE5"/>
</dbReference>
<dbReference type="PRINTS" id="PR01435">
    <property type="entry name" value="NPOXDRDTASE5"/>
</dbReference>
<proteinExistence type="inferred from homology"/>